<dbReference type="EC" id="2.3.1.35" evidence="1"/>
<dbReference type="EC" id="2.3.1.1" evidence="1"/>
<dbReference type="EMBL" id="CH476656">
    <property type="protein sequence ID" value="EDN06394.1"/>
    <property type="molecule type" value="Genomic_DNA"/>
</dbReference>
<dbReference type="RefSeq" id="XP_001542826.1">
    <property type="nucleotide sequence ID" value="XM_001542776.1"/>
</dbReference>
<dbReference type="SMR" id="A6R040"/>
<dbReference type="STRING" id="339724.A6R040"/>
<dbReference type="MEROPS" id="T05.001"/>
<dbReference type="GeneID" id="5448439"/>
<dbReference type="KEGG" id="aje:HCAG_02997"/>
<dbReference type="VEuPathDB" id="FungiDB:HCAG_02997"/>
<dbReference type="HOGENOM" id="CLU_027172_1_0_1"/>
<dbReference type="OMA" id="WGRIVMA"/>
<dbReference type="OrthoDB" id="5233at299071"/>
<dbReference type="UniPathway" id="UPA00068">
    <property type="reaction ID" value="UER00106"/>
</dbReference>
<dbReference type="UniPathway" id="UPA00068">
    <property type="reaction ID" value="UER00111"/>
</dbReference>
<dbReference type="Proteomes" id="UP000009297">
    <property type="component" value="Unassembled WGS sequence"/>
</dbReference>
<dbReference type="GO" id="GO:0005759">
    <property type="term" value="C:mitochondrial matrix"/>
    <property type="evidence" value="ECO:0007669"/>
    <property type="project" value="UniProtKB-SubCell"/>
</dbReference>
<dbReference type="GO" id="GO:0004358">
    <property type="term" value="F:glutamate N-acetyltransferase activity"/>
    <property type="evidence" value="ECO:0007669"/>
    <property type="project" value="UniProtKB-UniRule"/>
</dbReference>
<dbReference type="GO" id="GO:0004042">
    <property type="term" value="F:L-glutamate N-acetyltransferase activity"/>
    <property type="evidence" value="ECO:0007669"/>
    <property type="project" value="UniProtKB-UniRule"/>
</dbReference>
<dbReference type="GO" id="GO:0006526">
    <property type="term" value="P:L-arginine biosynthetic process"/>
    <property type="evidence" value="ECO:0007669"/>
    <property type="project" value="UniProtKB-UniRule"/>
</dbReference>
<dbReference type="GO" id="GO:0006592">
    <property type="term" value="P:ornithine biosynthetic process"/>
    <property type="evidence" value="ECO:0007669"/>
    <property type="project" value="TreeGrafter"/>
</dbReference>
<dbReference type="CDD" id="cd02152">
    <property type="entry name" value="OAT"/>
    <property type="match status" value="1"/>
</dbReference>
<dbReference type="FunFam" id="3.60.70.12:FF:000001">
    <property type="entry name" value="Arginine biosynthesis bifunctional protein ArgJ, chloroplastic"/>
    <property type="match status" value="1"/>
</dbReference>
<dbReference type="FunFam" id="3.10.20.340:FF:000002">
    <property type="entry name" value="Arginine biosynthesis bifunctional protein ArgJ, mitochondrial"/>
    <property type="match status" value="1"/>
</dbReference>
<dbReference type="FunFam" id="3.30.2330.10:FF:000001">
    <property type="entry name" value="Arginine biosynthesis bifunctional protein ArgJ, mitochondrial"/>
    <property type="match status" value="1"/>
</dbReference>
<dbReference type="Gene3D" id="3.30.2330.10">
    <property type="entry name" value="arginine biosynthesis bifunctional protein suprefamily"/>
    <property type="match status" value="1"/>
</dbReference>
<dbReference type="Gene3D" id="3.10.20.340">
    <property type="entry name" value="ArgJ beta chain, C-terminal domain"/>
    <property type="match status" value="1"/>
</dbReference>
<dbReference type="Gene3D" id="3.60.70.12">
    <property type="entry name" value="L-amino peptidase D-ALA esterase/amidase"/>
    <property type="match status" value="1"/>
</dbReference>
<dbReference type="HAMAP" id="MF_01106">
    <property type="entry name" value="ArgJ"/>
    <property type="match status" value="1"/>
</dbReference>
<dbReference type="InterPro" id="IPR002813">
    <property type="entry name" value="Arg_biosynth_ArgJ"/>
</dbReference>
<dbReference type="InterPro" id="IPR016117">
    <property type="entry name" value="ArgJ-like_dom_sf"/>
</dbReference>
<dbReference type="InterPro" id="IPR042195">
    <property type="entry name" value="ArgJ_beta_C"/>
</dbReference>
<dbReference type="NCBIfam" id="TIGR00120">
    <property type="entry name" value="ArgJ"/>
    <property type="match status" value="1"/>
</dbReference>
<dbReference type="NCBIfam" id="NF003802">
    <property type="entry name" value="PRK05388.1"/>
    <property type="match status" value="1"/>
</dbReference>
<dbReference type="PANTHER" id="PTHR23100">
    <property type="entry name" value="ARGININE BIOSYNTHESIS BIFUNCTIONAL PROTEIN ARGJ"/>
    <property type="match status" value="1"/>
</dbReference>
<dbReference type="PANTHER" id="PTHR23100:SF0">
    <property type="entry name" value="ARGININE BIOSYNTHESIS BIFUNCTIONAL PROTEIN ARGJ, MITOCHONDRIAL"/>
    <property type="match status" value="1"/>
</dbReference>
<dbReference type="Pfam" id="PF01960">
    <property type="entry name" value="ArgJ"/>
    <property type="match status" value="1"/>
</dbReference>
<dbReference type="SUPFAM" id="SSF56266">
    <property type="entry name" value="DmpA/ArgJ-like"/>
    <property type="match status" value="1"/>
</dbReference>
<organism>
    <name type="scientific">Ajellomyces capsulatus (strain NAm1 / WU24)</name>
    <name type="common">Darling's disease fungus</name>
    <name type="synonym">Histoplasma capsulatum</name>
    <dbReference type="NCBI Taxonomy" id="2059318"/>
    <lineage>
        <taxon>Eukaryota</taxon>
        <taxon>Fungi</taxon>
        <taxon>Dikarya</taxon>
        <taxon>Ascomycota</taxon>
        <taxon>Pezizomycotina</taxon>
        <taxon>Eurotiomycetes</taxon>
        <taxon>Eurotiomycetidae</taxon>
        <taxon>Onygenales</taxon>
        <taxon>Ajellomycetaceae</taxon>
        <taxon>Histoplasma</taxon>
    </lineage>
</organism>
<accession>A6R040</accession>
<protein>
    <recommendedName>
        <fullName evidence="1">Arginine biosynthesis bifunctional protein ArgJ, mitochondrial</fullName>
    </recommendedName>
    <domain>
        <recommendedName>
            <fullName evidence="1">Glutamate N-acetyltransferase</fullName>
            <shortName evidence="1">GAT</shortName>
            <ecNumber evidence="1">2.3.1.35</ecNumber>
        </recommendedName>
        <alternativeName>
            <fullName evidence="1">Ornithine acetyltransferase</fullName>
            <shortName evidence="1">OATase</shortName>
        </alternativeName>
        <alternativeName>
            <fullName evidence="1">Ornithine transacetylase</fullName>
        </alternativeName>
    </domain>
    <domain>
        <recommendedName>
            <fullName evidence="1">Amino-acid acetyltransferase</fullName>
            <ecNumber evidence="1">2.3.1.1</ecNumber>
        </recommendedName>
        <alternativeName>
            <fullName evidence="1">N-acetylglutamate synthase</fullName>
            <shortName evidence="1">AGS</shortName>
        </alternativeName>
    </domain>
    <component>
        <recommendedName>
            <fullName evidence="1">Arginine biosynthesis bifunctional protein ArgJ alpha chain</fullName>
        </recommendedName>
    </component>
    <component>
        <recommendedName>
            <fullName evidence="1">Arginine biosynthesis bifunctional protein ArgJ beta chain</fullName>
        </recommendedName>
    </component>
</protein>
<proteinExistence type="inferred from homology"/>
<sequence>MKNPKPFGVVAGFVRLHKSSLGQARYYSIPNDVSIPASKRKFIPSSGTYPKGFLVACAHAGVKESNTQFPDVALICSETPCSAAAVFTTNKFQAAPVQVSKQVLEKRQGAGIRGVVINSGCANAVTGKGGLEHAKMMSAKVDECNGTPSTGPQDTSTLVMSTGVIGQRLPIKKILDAIPTAHSNLASTHSTWLATARAICTTDTFPKLLSRPFTLPSSPNRQYCLAGMTKGAGMIHPNMATLLGILCTDVPISPSALKALLTHAVSRSFNAISIDGDTSTNDTIALLANGAAGGEAITTTSSPDYAAMQTILTSFAQSLAQLVVRDGEGATKFIMVRVCNSPSHADAKVIASTIARSPLVKTALYGKDANWGRILCAIGYAQGIAEGTVVPERTSVSFRPVDGSAELKLLVNGERKAWNESRREDLADEDLEIVLIWCRQKGEKGLGGGGGVVLVCDFSHEYVTINGDYRT</sequence>
<gene>
    <name type="ORF">HCAG_02997</name>
</gene>
<feature type="chain" id="PRO_0000398004" description="Arginine biosynthesis bifunctional protein ArgJ alpha chain" evidence="1">
    <location>
        <begin position="1"/>
        <end position="240"/>
    </location>
</feature>
<feature type="chain" id="PRO_0000398005" description="Arginine biosynthesis bifunctional protein ArgJ beta chain" evidence="1">
    <location>
        <begin position="241"/>
        <end position="471"/>
    </location>
</feature>
<feature type="active site" description="Nucleophile" evidence="1">
    <location>
        <position position="241"/>
    </location>
</feature>
<feature type="binding site" evidence="1">
    <location>
        <position position="201"/>
    </location>
    <ligand>
        <name>substrate</name>
    </ligand>
</feature>
<feature type="binding site" evidence="1">
    <location>
        <position position="230"/>
    </location>
    <ligand>
        <name>substrate</name>
    </ligand>
</feature>
<feature type="binding site" evidence="1">
    <location>
        <position position="241"/>
    </location>
    <ligand>
        <name>substrate</name>
    </ligand>
</feature>
<feature type="binding site" evidence="1">
    <location>
        <position position="328"/>
    </location>
    <ligand>
        <name>substrate</name>
    </ligand>
</feature>
<feature type="binding site" evidence="1">
    <location>
        <position position="466"/>
    </location>
    <ligand>
        <name>substrate</name>
    </ligand>
</feature>
<feature type="binding site" evidence="1">
    <location>
        <position position="471"/>
    </location>
    <ligand>
        <name>substrate</name>
    </ligand>
</feature>
<feature type="site" description="Involved in the stabilization of negative charge on the oxyanion by the formation of the oxyanion hole" evidence="1">
    <location>
        <position position="162"/>
    </location>
</feature>
<feature type="site" description="Involved in the stabilization of negative charge on the oxyanion by the formation of the oxyanion hole" evidence="1">
    <location>
        <position position="163"/>
    </location>
</feature>
<feature type="site" description="Cleavage; by autolysis" evidence="1">
    <location>
        <begin position="240"/>
        <end position="241"/>
    </location>
</feature>
<comment type="function">
    <text evidence="1">Catalyzes two activities which are involved in the cyclic version of arginine biosynthesis: the synthesis of acetylglutamate from glutamate and acetyl-CoA, and of ornithine by transacetylation between acetylornithine and glutamate.</text>
</comment>
<comment type="catalytic activity">
    <reaction evidence="1">
        <text>N(2)-acetyl-L-ornithine + L-glutamate = N-acetyl-L-glutamate + L-ornithine</text>
        <dbReference type="Rhea" id="RHEA:15349"/>
        <dbReference type="ChEBI" id="CHEBI:29985"/>
        <dbReference type="ChEBI" id="CHEBI:44337"/>
        <dbReference type="ChEBI" id="CHEBI:46911"/>
        <dbReference type="ChEBI" id="CHEBI:57805"/>
        <dbReference type="EC" id="2.3.1.35"/>
    </reaction>
</comment>
<comment type="catalytic activity">
    <reaction evidence="1">
        <text>L-glutamate + acetyl-CoA = N-acetyl-L-glutamate + CoA + H(+)</text>
        <dbReference type="Rhea" id="RHEA:24292"/>
        <dbReference type="ChEBI" id="CHEBI:15378"/>
        <dbReference type="ChEBI" id="CHEBI:29985"/>
        <dbReference type="ChEBI" id="CHEBI:44337"/>
        <dbReference type="ChEBI" id="CHEBI:57287"/>
        <dbReference type="ChEBI" id="CHEBI:57288"/>
        <dbReference type="EC" id="2.3.1.1"/>
    </reaction>
</comment>
<comment type="pathway">
    <text evidence="1">Amino-acid biosynthesis; L-arginine biosynthesis; L-ornithine and N-acetyl-L-glutamate from L-glutamate and N(2)-acetyl-L-ornithine (cyclic): step 1/1.</text>
</comment>
<comment type="pathway">
    <text evidence="1">Amino-acid biosynthesis; L-arginine biosynthesis; N(2)-acetyl-L-ornithine from L-glutamate: step 1/4.</text>
</comment>
<comment type="subunit">
    <text evidence="1">Heterodimer of an alpha and a beta chain.</text>
</comment>
<comment type="subcellular location">
    <subcellularLocation>
        <location evidence="1">Mitochondrion matrix</location>
    </subcellularLocation>
</comment>
<comment type="PTM">
    <text evidence="1">The alpha and beta chains are autoproteolytically processed from a single precursor protein within the mitochondrion.</text>
</comment>
<comment type="miscellaneous">
    <text evidence="1">This protein may be expected to contain an N-terminal transit peptide but none has been predicted.</text>
</comment>
<comment type="similarity">
    <text evidence="1">Belongs to the ArgJ family.</text>
</comment>
<name>ARGJ_AJECN</name>
<keyword id="KW-0012">Acyltransferase</keyword>
<keyword id="KW-0028">Amino-acid biosynthesis</keyword>
<keyword id="KW-0055">Arginine biosynthesis</keyword>
<keyword id="KW-0068">Autocatalytic cleavage</keyword>
<keyword id="KW-0496">Mitochondrion</keyword>
<keyword id="KW-0511">Multifunctional enzyme</keyword>
<keyword id="KW-1185">Reference proteome</keyword>
<keyword id="KW-0808">Transferase</keyword>
<evidence type="ECO:0000255" key="1">
    <source>
        <dbReference type="HAMAP-Rule" id="MF_03124"/>
    </source>
</evidence>
<reference key="1">
    <citation type="journal article" date="2009" name="Genome Res.">
        <title>Comparative genomic analyses of the human fungal pathogens Coccidioides and their relatives.</title>
        <authorList>
            <person name="Sharpton T.J."/>
            <person name="Stajich J.E."/>
            <person name="Rounsley S.D."/>
            <person name="Gardner M.J."/>
            <person name="Wortman J.R."/>
            <person name="Jordar V.S."/>
            <person name="Maiti R."/>
            <person name="Kodira C.D."/>
            <person name="Neafsey D.E."/>
            <person name="Zeng Q."/>
            <person name="Hung C.-Y."/>
            <person name="McMahan C."/>
            <person name="Muszewska A."/>
            <person name="Grynberg M."/>
            <person name="Mandel M.A."/>
            <person name="Kellner E.M."/>
            <person name="Barker B.M."/>
            <person name="Galgiani J.N."/>
            <person name="Orbach M.J."/>
            <person name="Kirkland T.N."/>
            <person name="Cole G.T."/>
            <person name="Henn M.R."/>
            <person name="Birren B.W."/>
            <person name="Taylor J.W."/>
        </authorList>
    </citation>
    <scope>NUCLEOTIDE SEQUENCE [LARGE SCALE GENOMIC DNA]</scope>
    <source>
        <strain>NAm1 / WU24</strain>
    </source>
</reference>